<reference key="1">
    <citation type="journal article" date="1999" name="DNA Seq.">
        <title>Cloning, DNA sequence analysis, and deletion of a gene encoding diacetyl-acetoin reductase from Lactococcus lactis.</title>
        <authorList>
            <person name="Aungpraphapornchai P."/>
            <person name="Griffin H.G."/>
            <person name="Gasson M.J."/>
        </authorList>
    </citation>
    <scope>NUCLEOTIDE SEQUENCE [GENOMIC DNA]</scope>
    <source>
        <strain>NZ9000</strain>
    </source>
</reference>
<reference key="2">
    <citation type="journal article" date="2010" name="J. Bacteriol.">
        <title>Genome sequences of Lactococcus lactis MG1363 (revised) and NZ9000 and comparative physiological studies.</title>
        <authorList>
            <person name="Linares D.M."/>
            <person name="Kok J."/>
            <person name="Poolman B."/>
        </authorList>
    </citation>
    <scope>NUCLEOTIDE SEQUENCE [LARGE SCALE GENOMIC DNA]</scope>
    <source>
        <strain>NZ9000</strain>
    </source>
</reference>
<organism>
    <name type="scientific">Lactococcus lactis subsp. cremoris (strain NZ9000)</name>
    <dbReference type="NCBI Taxonomy" id="746361"/>
    <lineage>
        <taxon>Bacteria</taxon>
        <taxon>Bacillati</taxon>
        <taxon>Bacillota</taxon>
        <taxon>Bacilli</taxon>
        <taxon>Lactobacillales</taxon>
        <taxon>Streptococcaceae</taxon>
        <taxon>Lactococcus</taxon>
        <taxon>Lactococcus cremoris subsp. cremoris</taxon>
    </lineage>
</organism>
<gene>
    <name type="ordered locus">LLNZ_01795</name>
</gene>
<evidence type="ECO:0000255" key="1">
    <source>
        <dbReference type="HAMAP-Rule" id="MF_01572"/>
    </source>
</evidence>
<proteinExistence type="inferred from homology"/>
<sequence length="182" mass="19436">MKNNSVKIVVATGIGAALFVIIGWLINIPTPIPNTSIQLQYAVLALFSALFGPLAGFLIGFIGHALKDSFLYGAPWWTWVLGSGLMGLFLGFGVKRESLTQGIFGNKEIIRFNIVQFLANVVVWGLIAPIGDILVYSEPANKVFTQGVVAGLVNALTIAVAGTLLLKLYAATRTKSGTLDKE</sequence>
<dbReference type="EMBL" id="AJ012388">
    <property type="protein sequence ID" value="CAB59830.1"/>
    <property type="molecule type" value="Genomic_DNA"/>
</dbReference>
<dbReference type="EMBL" id="CP002094">
    <property type="protein sequence ID" value="ADJ59363.1"/>
    <property type="molecule type" value="Genomic_DNA"/>
</dbReference>
<dbReference type="RefSeq" id="WP_011834403.1">
    <property type="nucleotide sequence ID" value="NC_017949.1"/>
</dbReference>
<dbReference type="KEGG" id="lln:LLNZ_01795"/>
<dbReference type="PATRIC" id="fig|746361.3.peg.352"/>
<dbReference type="HOGENOM" id="CLU_120023_0_0_9"/>
<dbReference type="GO" id="GO:0005886">
    <property type="term" value="C:plasma membrane"/>
    <property type="evidence" value="ECO:0007669"/>
    <property type="project" value="UniProtKB-SubCell"/>
</dbReference>
<dbReference type="Gene3D" id="1.10.1760.20">
    <property type="match status" value="1"/>
</dbReference>
<dbReference type="HAMAP" id="MF_01572">
    <property type="entry name" value="UPF0397"/>
    <property type="match status" value="1"/>
</dbReference>
<dbReference type="InterPro" id="IPR009825">
    <property type="entry name" value="ECF_substrate-spec-like"/>
</dbReference>
<dbReference type="InterPro" id="IPR022914">
    <property type="entry name" value="UPF0397"/>
</dbReference>
<dbReference type="NCBIfam" id="NF010182">
    <property type="entry name" value="PRK13661.1"/>
    <property type="match status" value="1"/>
</dbReference>
<dbReference type="PANTHER" id="PTHR37815">
    <property type="entry name" value="UPF0397 PROTEIN BC_2624-RELATED"/>
    <property type="match status" value="1"/>
</dbReference>
<dbReference type="PANTHER" id="PTHR37815:SF3">
    <property type="entry name" value="UPF0397 PROTEIN SPR0429"/>
    <property type="match status" value="1"/>
</dbReference>
<dbReference type="Pfam" id="PF07155">
    <property type="entry name" value="ECF-ribofla_trS"/>
    <property type="match status" value="1"/>
</dbReference>
<accession>D8KFN3</accession>
<accession>A2RI55</accession>
<accession>Q9RLV3</accession>
<name>Y1795_LACLN</name>
<comment type="subcellular location">
    <subcellularLocation>
        <location evidence="1">Cell membrane</location>
        <topology evidence="1">Multi-pass membrane protein</topology>
    </subcellularLocation>
</comment>
<comment type="similarity">
    <text evidence="1">Belongs to the UPF0397 family.</text>
</comment>
<feature type="chain" id="PRO_0000402188" description="UPF0397 protein LLNZ_01795">
    <location>
        <begin position="1"/>
        <end position="182"/>
    </location>
</feature>
<feature type="transmembrane region" description="Helical" evidence="1">
    <location>
        <begin position="8"/>
        <end position="28"/>
    </location>
</feature>
<feature type="transmembrane region" description="Helical" evidence="1">
    <location>
        <begin position="42"/>
        <end position="62"/>
    </location>
</feature>
<feature type="transmembrane region" description="Helical" evidence="1">
    <location>
        <begin position="74"/>
        <end position="94"/>
    </location>
</feature>
<feature type="transmembrane region" description="Helical" evidence="1">
    <location>
        <begin position="114"/>
        <end position="134"/>
    </location>
</feature>
<feature type="transmembrane region" description="Helical" evidence="1">
    <location>
        <begin position="146"/>
        <end position="166"/>
    </location>
</feature>
<keyword id="KW-1003">Cell membrane</keyword>
<keyword id="KW-0472">Membrane</keyword>
<keyword id="KW-0812">Transmembrane</keyword>
<keyword id="KW-1133">Transmembrane helix</keyword>
<protein>
    <recommendedName>
        <fullName evidence="1">UPF0397 protein LLNZ_01795</fullName>
    </recommendedName>
    <alternativeName>
        <fullName>ORF6</fullName>
    </alternativeName>
</protein>